<gene>
    <name type="primary">spo0A</name>
    <name type="ordered locus">Moth_1505</name>
</gene>
<evidence type="ECO:0000250" key="1"/>
<evidence type="ECO:0000255" key="2"/>
<evidence type="ECO:0000255" key="3">
    <source>
        <dbReference type="PROSITE-ProRule" id="PRU00169"/>
    </source>
</evidence>
<evidence type="ECO:0000305" key="4"/>
<organism>
    <name type="scientific">Moorella thermoacetica (strain ATCC 39073 / JCM 9320)</name>
    <dbReference type="NCBI Taxonomy" id="264732"/>
    <lineage>
        <taxon>Bacteria</taxon>
        <taxon>Bacillati</taxon>
        <taxon>Bacillota</taxon>
        <taxon>Clostridia</taxon>
        <taxon>Moorellales</taxon>
        <taxon>Moorellaceae</taxon>
        <taxon>Moorella</taxon>
    </lineage>
</organism>
<dbReference type="EMBL" id="CP000232">
    <property type="protein sequence ID" value="ABC19814.1"/>
    <property type="molecule type" value="Genomic_DNA"/>
</dbReference>
<dbReference type="EMBL" id="U09983">
    <property type="protein sequence ID" value="AAA18884.1"/>
    <property type="molecule type" value="Unassigned_DNA"/>
</dbReference>
<dbReference type="PIR" id="S60881">
    <property type="entry name" value="S60881"/>
</dbReference>
<dbReference type="RefSeq" id="YP_430357.1">
    <property type="nucleotide sequence ID" value="NC_007644.1"/>
</dbReference>
<dbReference type="SMR" id="P52941"/>
<dbReference type="STRING" id="264732.Moth_1505"/>
<dbReference type="EnsemblBacteria" id="ABC19814">
    <property type="protein sequence ID" value="ABC19814"/>
    <property type="gene ID" value="Moth_1505"/>
</dbReference>
<dbReference type="KEGG" id="mta:Moth_1505"/>
<dbReference type="PATRIC" id="fig|264732.11.peg.1631"/>
<dbReference type="eggNOG" id="COG0745">
    <property type="taxonomic scope" value="Bacteria"/>
</dbReference>
<dbReference type="HOGENOM" id="CLU_072509_0_0_9"/>
<dbReference type="OrthoDB" id="9793299at2"/>
<dbReference type="GO" id="GO:0005829">
    <property type="term" value="C:cytosol"/>
    <property type="evidence" value="ECO:0007669"/>
    <property type="project" value="TreeGrafter"/>
</dbReference>
<dbReference type="GO" id="GO:0032993">
    <property type="term" value="C:protein-DNA complex"/>
    <property type="evidence" value="ECO:0007669"/>
    <property type="project" value="TreeGrafter"/>
</dbReference>
<dbReference type="GO" id="GO:0005509">
    <property type="term" value="F:calcium ion binding"/>
    <property type="evidence" value="ECO:0007669"/>
    <property type="project" value="InterPro"/>
</dbReference>
<dbReference type="GO" id="GO:0003700">
    <property type="term" value="F:DNA-binding transcription factor activity"/>
    <property type="evidence" value="ECO:0007669"/>
    <property type="project" value="InterPro"/>
</dbReference>
<dbReference type="GO" id="GO:0000156">
    <property type="term" value="F:phosphorelay response regulator activity"/>
    <property type="evidence" value="ECO:0007669"/>
    <property type="project" value="TreeGrafter"/>
</dbReference>
<dbReference type="GO" id="GO:0000976">
    <property type="term" value="F:transcription cis-regulatory region binding"/>
    <property type="evidence" value="ECO:0007669"/>
    <property type="project" value="TreeGrafter"/>
</dbReference>
<dbReference type="GO" id="GO:0051606">
    <property type="term" value="P:detection of stimulus"/>
    <property type="evidence" value="ECO:0007669"/>
    <property type="project" value="InterPro"/>
</dbReference>
<dbReference type="GO" id="GO:0042173">
    <property type="term" value="P:regulation of sporulation resulting in formation of a cellular spore"/>
    <property type="evidence" value="ECO:0007669"/>
    <property type="project" value="InterPro"/>
</dbReference>
<dbReference type="GO" id="GO:0030435">
    <property type="term" value="P:sporulation resulting in formation of a cellular spore"/>
    <property type="evidence" value="ECO:0007669"/>
    <property type="project" value="UniProtKB-KW"/>
</dbReference>
<dbReference type="CDD" id="cd17561">
    <property type="entry name" value="REC_Spo0A"/>
    <property type="match status" value="1"/>
</dbReference>
<dbReference type="Gene3D" id="3.40.50.2300">
    <property type="match status" value="1"/>
</dbReference>
<dbReference type="Gene3D" id="1.10.10.10">
    <property type="entry name" value="Winged helix-like DNA-binding domain superfamily/Winged helix DNA-binding domain"/>
    <property type="match status" value="1"/>
</dbReference>
<dbReference type="InterPro" id="IPR011006">
    <property type="entry name" value="CheY-like_superfamily"/>
</dbReference>
<dbReference type="InterPro" id="IPR016032">
    <property type="entry name" value="Sig_transdc_resp-reg_C-effctor"/>
</dbReference>
<dbReference type="InterPro" id="IPR001789">
    <property type="entry name" value="Sig_transdc_resp-reg_receiver"/>
</dbReference>
<dbReference type="InterPro" id="IPR014879">
    <property type="entry name" value="Spo0A_C"/>
</dbReference>
<dbReference type="InterPro" id="IPR012052">
    <property type="entry name" value="Spore_0_A"/>
</dbReference>
<dbReference type="InterPro" id="IPR039420">
    <property type="entry name" value="WalR-like"/>
</dbReference>
<dbReference type="InterPro" id="IPR036388">
    <property type="entry name" value="WH-like_DNA-bd_sf"/>
</dbReference>
<dbReference type="NCBIfam" id="TIGR02875">
    <property type="entry name" value="spore_0_A"/>
    <property type="match status" value="1"/>
</dbReference>
<dbReference type="PANTHER" id="PTHR48111">
    <property type="entry name" value="REGULATOR OF RPOS"/>
    <property type="match status" value="1"/>
</dbReference>
<dbReference type="PANTHER" id="PTHR48111:SF1">
    <property type="entry name" value="TWO-COMPONENT RESPONSE REGULATOR ORR33"/>
    <property type="match status" value="1"/>
</dbReference>
<dbReference type="Pfam" id="PF00072">
    <property type="entry name" value="Response_reg"/>
    <property type="match status" value="1"/>
</dbReference>
<dbReference type="Pfam" id="PF08769">
    <property type="entry name" value="Spo0A_C"/>
    <property type="match status" value="1"/>
</dbReference>
<dbReference type="PIRSF" id="PIRSF002937">
    <property type="entry name" value="Res_reg_Spo0A"/>
    <property type="match status" value="1"/>
</dbReference>
<dbReference type="SMART" id="SM00448">
    <property type="entry name" value="REC"/>
    <property type="match status" value="1"/>
</dbReference>
<dbReference type="SUPFAM" id="SSF46894">
    <property type="entry name" value="C-terminal effector domain of the bipartite response regulators"/>
    <property type="match status" value="1"/>
</dbReference>
<dbReference type="SUPFAM" id="SSF52172">
    <property type="entry name" value="CheY-like"/>
    <property type="match status" value="1"/>
</dbReference>
<dbReference type="PROSITE" id="PS50110">
    <property type="entry name" value="RESPONSE_REGULATORY"/>
    <property type="match status" value="1"/>
</dbReference>
<name>SP0A_MOOTA</name>
<sequence>MEAIKVLIADDNREFCEVLEEYFNEQEDFVLSGVAHNGQETLELIQEQEPDIVILDIIMPHLDGIGVLEKLQVLNFEPRPKIVILTALGQESMTMRSVELGADYYILKPFDLEVLGNRLRQLANGHPLPTAPSQVSRAGRNMDVEVTKIIHQMGVPAHIKGYQYLREAILMVIDDVSLLGAVTKELYPLIARKYMTTPSRVERAIRHAIELAWDRGNVEMMNKFFGYTINVERGKPTNSEFIAMVADKLRIGAKIN</sequence>
<feature type="chain" id="PRO_0000081243" description="Stage 0 sporulation protein A homolog">
    <location>
        <begin position="1"/>
        <end position="256"/>
    </location>
</feature>
<feature type="domain" description="Response regulatory" evidence="3">
    <location>
        <begin position="5"/>
        <end position="123"/>
    </location>
</feature>
<feature type="DNA-binding region" description="H-T-H motif" evidence="2">
    <location>
        <begin position="188"/>
        <end position="207"/>
    </location>
</feature>
<feature type="binding site" evidence="1">
    <location>
        <position position="10"/>
    </location>
    <ligand>
        <name>Ca(2+)</name>
        <dbReference type="ChEBI" id="CHEBI:29108"/>
    </ligand>
</feature>
<feature type="binding site" evidence="1">
    <location>
        <position position="11"/>
    </location>
    <ligand>
        <name>Ca(2+)</name>
        <dbReference type="ChEBI" id="CHEBI:29108"/>
    </ligand>
</feature>
<feature type="binding site" evidence="1">
    <location>
        <position position="56"/>
    </location>
    <ligand>
        <name>Ca(2+)</name>
        <dbReference type="ChEBI" id="CHEBI:29108"/>
    </ligand>
</feature>
<feature type="modified residue" description="4-aspartylphosphate" evidence="3">
    <location>
        <position position="56"/>
    </location>
</feature>
<feature type="sequence conflict" description="In Ref. 2; AAA18884." evidence="4" ref="2">
    <original>C</original>
    <variation>S</variation>
    <location>
        <position position="16"/>
    </location>
</feature>
<accession>P52941</accession>
<accession>Q2RIC5</accession>
<keyword id="KW-0010">Activator</keyword>
<keyword id="KW-0106">Calcium</keyword>
<keyword id="KW-0963">Cytoplasm</keyword>
<keyword id="KW-0238">DNA-binding</keyword>
<keyword id="KW-0479">Metal-binding</keyword>
<keyword id="KW-0597">Phosphoprotein</keyword>
<keyword id="KW-0678">Repressor</keyword>
<keyword id="KW-0749">Sporulation</keyword>
<keyword id="KW-0804">Transcription</keyword>
<keyword id="KW-0805">Transcription regulation</keyword>
<keyword id="KW-0902">Two-component regulatory system</keyword>
<comment type="function">
    <text evidence="1">May play the central regulatory role in sporulation. It may be an element of the effector pathway responsible for the activation of sporulation genes in response to nutritional stress. Spo0A may act in concert with spo0H (a sigma factor) to control the expression of some genes that are critical to the sporulation process (By similarity).</text>
</comment>
<comment type="cofactor">
    <cofactor evidence="1">
        <name>Ca(2+)</name>
        <dbReference type="ChEBI" id="CHEBI:29108"/>
    </cofactor>
    <text evidence="1">Binds 1 Ca(2+) ion per subunit.</text>
</comment>
<comment type="subcellular location">
    <subcellularLocation>
        <location evidence="4">Cytoplasm</location>
    </subcellularLocation>
</comment>
<reference key="1">
    <citation type="journal article" date="2008" name="Environ. Microbiol.">
        <title>The complete genome sequence of Moorella thermoacetica (f. Clostridium thermoaceticum).</title>
        <authorList>
            <person name="Pierce E."/>
            <person name="Xie G."/>
            <person name="Barabote R.D."/>
            <person name="Saunders E."/>
            <person name="Han C.S."/>
            <person name="Detter J.C."/>
            <person name="Richardson P."/>
            <person name="Brettin T.S."/>
            <person name="Das A."/>
            <person name="Ljungdahl L.G."/>
            <person name="Ragsdale S.W."/>
        </authorList>
    </citation>
    <scope>NUCLEOTIDE SEQUENCE [LARGE SCALE GENOMIC DNA]</scope>
    <source>
        <strain>ATCC 39073 / JCM 9320</strain>
    </source>
</reference>
<reference key="2">
    <citation type="journal article" date="1994" name="Mol. Microbiol.">
        <title>Characterization of spo0A homologues in diverse Bacillus and Clostridium species identifies a probable DNA-binding domain.</title>
        <authorList>
            <person name="Brown D.P."/>
            <person name="Ganova-Raeva L."/>
            <person name="Green B.D."/>
            <person name="Wilkinson S.R."/>
            <person name="Young M."/>
            <person name="Youngman P."/>
        </authorList>
    </citation>
    <scope>NUCLEOTIDE SEQUENCE [GENOMIC DNA] OF 1-206</scope>
</reference>
<proteinExistence type="inferred from homology"/>
<protein>
    <recommendedName>
        <fullName>Stage 0 sporulation protein A homolog</fullName>
    </recommendedName>
</protein>